<organism>
    <name type="scientific">Mycobacterium tuberculosis (strain ATCC 25618 / H37Rv)</name>
    <dbReference type="NCBI Taxonomy" id="83332"/>
    <lineage>
        <taxon>Bacteria</taxon>
        <taxon>Bacillati</taxon>
        <taxon>Actinomycetota</taxon>
        <taxon>Actinomycetes</taxon>
        <taxon>Mycobacteriales</taxon>
        <taxon>Mycobacteriaceae</taxon>
        <taxon>Mycobacterium</taxon>
        <taxon>Mycobacterium tuberculosis complex</taxon>
    </lineage>
</organism>
<proteinExistence type="evidence at transcript level"/>
<keyword id="KW-0028">Amino-acid biosynthesis</keyword>
<keyword id="KW-0100">Branched-chain amino acid biosynthesis</keyword>
<keyword id="KW-0274">FAD</keyword>
<keyword id="KW-0285">Flavoprotein</keyword>
<keyword id="KW-0460">Magnesium</keyword>
<keyword id="KW-0479">Metal-binding</keyword>
<keyword id="KW-1185">Reference proteome</keyword>
<keyword id="KW-0786">Thiamine pyrophosphate</keyword>
<keyword id="KW-0808">Transferase</keyword>
<feature type="chain" id="PRO_0000396952" description="Putative acetolactate synthase large subunit IlvB2">
    <location>
        <begin position="1"/>
        <end position="552"/>
    </location>
</feature>
<feature type="region of interest" description="Thiamine pyrophosphate binding" evidence="1">
    <location>
        <begin position="394"/>
        <end position="474"/>
    </location>
</feature>
<feature type="binding site" evidence="1">
    <location>
        <position position="48"/>
    </location>
    <ligand>
        <name>thiamine diphosphate</name>
        <dbReference type="ChEBI" id="CHEBI:58937"/>
    </ligand>
</feature>
<feature type="binding site" evidence="1">
    <location>
        <begin position="262"/>
        <end position="285"/>
    </location>
    <ligand>
        <name>FAD</name>
        <dbReference type="ChEBI" id="CHEBI:57692"/>
    </ligand>
</feature>
<feature type="binding site" evidence="1">
    <location>
        <begin position="309"/>
        <end position="328"/>
    </location>
    <ligand>
        <name>FAD</name>
        <dbReference type="ChEBI" id="CHEBI:57692"/>
    </ligand>
</feature>
<feature type="binding site" evidence="1">
    <location>
        <position position="445"/>
    </location>
    <ligand>
        <name>Mg(2+)</name>
        <dbReference type="ChEBI" id="CHEBI:18420"/>
    </ligand>
</feature>
<protein>
    <recommendedName>
        <fullName>Putative acetolactate synthase large subunit IlvB2</fullName>
        <shortName>ALS</shortName>
        <ecNumber>2.2.1.6</ecNumber>
    </recommendedName>
    <alternativeName>
        <fullName>Acetohydroxy-acid synthase large subunit</fullName>
        <shortName>AHAS</shortName>
    </alternativeName>
</protein>
<dbReference type="EC" id="2.2.1.6"/>
<dbReference type="EMBL" id="AL123456">
    <property type="protein sequence ID" value="CCP46292.1"/>
    <property type="molecule type" value="Genomic_DNA"/>
</dbReference>
<dbReference type="PIR" id="C70567">
    <property type="entry name" value="C70567"/>
</dbReference>
<dbReference type="RefSeq" id="NP_217987.1">
    <property type="nucleotide sequence ID" value="NC_000962.3"/>
</dbReference>
<dbReference type="RefSeq" id="WP_003900704.1">
    <property type="nucleotide sequence ID" value="NZ_NVQJ01000087.1"/>
</dbReference>
<dbReference type="SMR" id="O06335"/>
<dbReference type="FunCoup" id="O06335">
    <property type="interactions" value="146"/>
</dbReference>
<dbReference type="STRING" id="83332.Rv3470c"/>
<dbReference type="PaxDb" id="83332-Rv3470c"/>
<dbReference type="DNASU" id="888041"/>
<dbReference type="GeneID" id="888041"/>
<dbReference type="KEGG" id="mtu:Rv3470c"/>
<dbReference type="KEGG" id="mtv:RVBD_3470c"/>
<dbReference type="PATRIC" id="fig|83332.111.peg.3864"/>
<dbReference type="TubercuList" id="Rv3470c"/>
<dbReference type="eggNOG" id="COG0028">
    <property type="taxonomic scope" value="Bacteria"/>
</dbReference>
<dbReference type="InParanoid" id="O06335"/>
<dbReference type="OrthoDB" id="2254214at2"/>
<dbReference type="PhylomeDB" id="O06335"/>
<dbReference type="BRENDA" id="2.2.1.6">
    <property type="organism ID" value="3445"/>
</dbReference>
<dbReference type="UniPathway" id="UPA00047">
    <property type="reaction ID" value="UER00055"/>
</dbReference>
<dbReference type="UniPathway" id="UPA00049">
    <property type="reaction ID" value="UER00059"/>
</dbReference>
<dbReference type="Proteomes" id="UP000001584">
    <property type="component" value="Chromosome"/>
</dbReference>
<dbReference type="GO" id="GO:0005948">
    <property type="term" value="C:acetolactate synthase complex"/>
    <property type="evidence" value="ECO:0000318"/>
    <property type="project" value="GO_Central"/>
</dbReference>
<dbReference type="GO" id="GO:0003984">
    <property type="term" value="F:acetolactate synthase activity"/>
    <property type="evidence" value="ECO:0000318"/>
    <property type="project" value="GO_Central"/>
</dbReference>
<dbReference type="GO" id="GO:0050660">
    <property type="term" value="F:flavin adenine dinucleotide binding"/>
    <property type="evidence" value="ECO:0000318"/>
    <property type="project" value="GO_Central"/>
</dbReference>
<dbReference type="GO" id="GO:0000287">
    <property type="term" value="F:magnesium ion binding"/>
    <property type="evidence" value="ECO:0007669"/>
    <property type="project" value="InterPro"/>
</dbReference>
<dbReference type="GO" id="GO:0030976">
    <property type="term" value="F:thiamine pyrophosphate binding"/>
    <property type="evidence" value="ECO:0007669"/>
    <property type="project" value="InterPro"/>
</dbReference>
<dbReference type="GO" id="GO:0009097">
    <property type="term" value="P:isoleucine biosynthetic process"/>
    <property type="evidence" value="ECO:0000250"/>
    <property type="project" value="UniProtKB"/>
</dbReference>
<dbReference type="GO" id="GO:0009099">
    <property type="term" value="P:L-valine biosynthetic process"/>
    <property type="evidence" value="ECO:0000250"/>
    <property type="project" value="UniProtKB"/>
</dbReference>
<dbReference type="CDD" id="cd00568">
    <property type="entry name" value="TPP_enzymes"/>
    <property type="match status" value="1"/>
</dbReference>
<dbReference type="CDD" id="cd07035">
    <property type="entry name" value="TPP_PYR_POX_like"/>
    <property type="match status" value="1"/>
</dbReference>
<dbReference type="FunFam" id="3.40.50.970:FF:000007">
    <property type="entry name" value="Acetolactate synthase"/>
    <property type="match status" value="1"/>
</dbReference>
<dbReference type="Gene3D" id="3.40.50.970">
    <property type="match status" value="2"/>
</dbReference>
<dbReference type="Gene3D" id="3.40.50.1220">
    <property type="entry name" value="TPP-binding domain"/>
    <property type="match status" value="1"/>
</dbReference>
<dbReference type="InterPro" id="IPR029035">
    <property type="entry name" value="DHS-like_NAD/FAD-binding_dom"/>
</dbReference>
<dbReference type="InterPro" id="IPR029061">
    <property type="entry name" value="THDP-binding"/>
</dbReference>
<dbReference type="InterPro" id="IPR012000">
    <property type="entry name" value="Thiamin_PyroP_enz_cen_dom"/>
</dbReference>
<dbReference type="InterPro" id="IPR012001">
    <property type="entry name" value="Thiamin_PyroP_enz_TPP-bd_dom"/>
</dbReference>
<dbReference type="InterPro" id="IPR000399">
    <property type="entry name" value="TPP-bd_CS"/>
</dbReference>
<dbReference type="InterPro" id="IPR045229">
    <property type="entry name" value="TPP_enz"/>
</dbReference>
<dbReference type="InterPro" id="IPR011766">
    <property type="entry name" value="TPP_enzyme_TPP-bd"/>
</dbReference>
<dbReference type="PANTHER" id="PTHR18968:SF167">
    <property type="entry name" value="ACETOLACTATE SYNTHASE LARGE SUBUNIT ILVB2-RELATED"/>
    <property type="match status" value="1"/>
</dbReference>
<dbReference type="PANTHER" id="PTHR18968">
    <property type="entry name" value="THIAMINE PYROPHOSPHATE ENZYMES"/>
    <property type="match status" value="1"/>
</dbReference>
<dbReference type="Pfam" id="PF02775">
    <property type="entry name" value="TPP_enzyme_C"/>
    <property type="match status" value="1"/>
</dbReference>
<dbReference type="Pfam" id="PF00205">
    <property type="entry name" value="TPP_enzyme_M"/>
    <property type="match status" value="1"/>
</dbReference>
<dbReference type="Pfam" id="PF02776">
    <property type="entry name" value="TPP_enzyme_N"/>
    <property type="match status" value="1"/>
</dbReference>
<dbReference type="SUPFAM" id="SSF52467">
    <property type="entry name" value="DHS-like NAD/FAD-binding domain"/>
    <property type="match status" value="1"/>
</dbReference>
<dbReference type="SUPFAM" id="SSF52518">
    <property type="entry name" value="Thiamin diphosphate-binding fold (THDP-binding)"/>
    <property type="match status" value="2"/>
</dbReference>
<dbReference type="PROSITE" id="PS00187">
    <property type="entry name" value="TPP_ENZYMES"/>
    <property type="match status" value="1"/>
</dbReference>
<sequence length="552" mass="57257">MTVGDHLVARMRAAGISVVCGLPTSRLDSLLVRLSRDAGFQIVLARHEGGAGYLADGFARASGKSAAVFVAGPGATNVISAVANASVNQVPMLILTGEVAVGEFGLHSQQDTSDDGLGLGATFRRFCRCSVSIESIANARSKIDSAFRALASIPRGPVHIALPRDLVDERLPAHQLGTAAAGLGGLRTLAPCGPDVADEVIGRLDRSRAPMLVLGNGCRLDGIGEQIVAFCEKAGLPFATTPNGRGIVAETHPLSLGVLGIFGDGRADEYLFDTPCDLLIAVGVSFGGLVTRSFSPRWRGLKADVVHVDPDPSAVGRFVATSLGITTSGRAFVNALNCGRPPRFCRRVGVRPPAPAALPGTPQARGESIHPLELMHELDRELAPNATICADVGTCISWTFRGIPVRRPGRFFATVDFSPMGCGIAGAIGVALARPEEHVICIAGDGAFLMHGTEISTAVAHGIRVTWAVLNDGQMSASAGPVSGRMDPSPVARIGANDLAAMARALGAEGIRVDTRCELRAGVQKALAATGPCVLDIAIDPEINKPDIGLGR</sequence>
<gene>
    <name type="primary">ilvB2</name>
    <name type="ordered locus">Rv3470c</name>
</gene>
<name>ILVB2_MYCTU</name>
<evidence type="ECO:0000250" key="1"/>
<evidence type="ECO:0000269" key="2">
    <source>
    </source>
</evidence>
<evidence type="ECO:0000305" key="3"/>
<accession>O06335</accession>
<accession>L0TE78</accession>
<comment type="function">
    <text evidence="1">Catalyzes the conversion of 2 pyruvate molecules into acetolactate in the first common step of the biosynthetic pathway of the branched-amino acids such as leucine, isoleucine, and valine.</text>
</comment>
<comment type="catalytic activity">
    <reaction>
        <text>2 pyruvate + H(+) = (2S)-2-acetolactate + CO2</text>
        <dbReference type="Rhea" id="RHEA:25249"/>
        <dbReference type="ChEBI" id="CHEBI:15361"/>
        <dbReference type="ChEBI" id="CHEBI:15378"/>
        <dbReference type="ChEBI" id="CHEBI:16526"/>
        <dbReference type="ChEBI" id="CHEBI:58476"/>
        <dbReference type="EC" id="2.2.1.6"/>
    </reaction>
</comment>
<comment type="cofactor">
    <cofactor evidence="1">
        <name>Mg(2+)</name>
        <dbReference type="ChEBI" id="CHEBI:18420"/>
    </cofactor>
    <text evidence="1">Binds 1 Mg(2+) ion per subunit.</text>
</comment>
<comment type="cofactor">
    <cofactor evidence="1">
        <name>thiamine diphosphate</name>
        <dbReference type="ChEBI" id="CHEBI:58937"/>
    </cofactor>
    <text evidence="1">Binds 1 thiamine pyrophosphate per subunit.</text>
</comment>
<comment type="pathway">
    <text>Amino-acid biosynthesis; L-isoleucine biosynthesis; L-isoleucine from 2-oxobutanoate: step 1/4.</text>
</comment>
<comment type="pathway">
    <text>Amino-acid biosynthesis; L-valine biosynthesis; L-valine from pyruvate: step 1/4.</text>
</comment>
<comment type="subunit">
    <text evidence="1">Heterodimer of large catalytic subunit and small regulatory subunit.</text>
</comment>
<comment type="induction">
    <text evidence="2">The expression is up-regulated in the mid-exponential and extended stationary phase.</text>
</comment>
<comment type="similarity">
    <text evidence="3">Belongs to the TPP enzyme family.</text>
</comment>
<reference key="1">
    <citation type="journal article" date="1998" name="Nature">
        <title>Deciphering the biology of Mycobacterium tuberculosis from the complete genome sequence.</title>
        <authorList>
            <person name="Cole S.T."/>
            <person name="Brosch R."/>
            <person name="Parkhill J."/>
            <person name="Garnier T."/>
            <person name="Churcher C.M."/>
            <person name="Harris D.E."/>
            <person name="Gordon S.V."/>
            <person name="Eiglmeier K."/>
            <person name="Gas S."/>
            <person name="Barry C.E. III"/>
            <person name="Tekaia F."/>
            <person name="Badcock K."/>
            <person name="Basham D."/>
            <person name="Brown D."/>
            <person name="Chillingworth T."/>
            <person name="Connor R."/>
            <person name="Davies R.M."/>
            <person name="Devlin K."/>
            <person name="Feltwell T."/>
            <person name="Gentles S."/>
            <person name="Hamlin N."/>
            <person name="Holroyd S."/>
            <person name="Hornsby T."/>
            <person name="Jagels K."/>
            <person name="Krogh A."/>
            <person name="McLean J."/>
            <person name="Moule S."/>
            <person name="Murphy L.D."/>
            <person name="Oliver S."/>
            <person name="Osborne J."/>
            <person name="Quail M.A."/>
            <person name="Rajandream M.A."/>
            <person name="Rogers J."/>
            <person name="Rutter S."/>
            <person name="Seeger K."/>
            <person name="Skelton S."/>
            <person name="Squares S."/>
            <person name="Squares R."/>
            <person name="Sulston J.E."/>
            <person name="Taylor K."/>
            <person name="Whitehead S."/>
            <person name="Barrell B.G."/>
        </authorList>
    </citation>
    <scope>NUCLEOTIDE SEQUENCE [LARGE SCALE GENOMIC DNA]</scope>
    <source>
        <strain>ATCC 25618 / H37Rv</strain>
    </source>
</reference>
<reference key="2">
    <citation type="journal article" date="2011" name="Microbiology">
        <title>Biochemical and transcription analysis of acetohydroxyacid synthase isoforms in Mycobacterium tuberculosis identifies these enzymes as potential targets for drug development.</title>
        <authorList>
            <person name="Singh V."/>
            <person name="Chandra D."/>
            <person name="Srivastava B.S."/>
            <person name="Srivastava R."/>
        </authorList>
    </citation>
    <scope>INDUCTION</scope>
</reference>